<accession>Q10075</accession>
<comment type="function">
    <text evidence="2 3">Required for detoxification of heavy metals such as cadmium and arsenate.</text>
</comment>
<comment type="catalytic activity">
    <reaction evidence="1">
        <text>[Glu(-Cys)](n)-Gly + glutathione + H(+) = [Glu(-Cys)](n+1)-Gly + glycine</text>
        <dbReference type="Rhea" id="RHEA:17917"/>
        <dbReference type="Rhea" id="RHEA-COMP:12438"/>
        <dbReference type="Rhea" id="RHEA-COMP:12439"/>
        <dbReference type="ChEBI" id="CHEBI:15378"/>
        <dbReference type="ChEBI" id="CHEBI:57305"/>
        <dbReference type="ChEBI" id="CHEBI:57925"/>
        <dbReference type="ChEBI" id="CHEBI:131728"/>
        <dbReference type="EC" id="2.3.2.15"/>
    </reaction>
</comment>
<comment type="induction">
    <text evidence="2">By cadmium, copper and zinc.</text>
</comment>
<comment type="similarity">
    <text evidence="1">Belongs to the phytochelatin synthase family.</text>
</comment>
<reference key="1">
    <citation type="journal article" date="2002" name="Nature">
        <title>The genome sequence of Schizosaccharomyces pombe.</title>
        <authorList>
            <person name="Wood V."/>
            <person name="Gwilliam R."/>
            <person name="Rajandream M.A."/>
            <person name="Lyne M.H."/>
            <person name="Lyne R."/>
            <person name="Stewart A."/>
            <person name="Sgouros J.G."/>
            <person name="Peat N."/>
            <person name="Hayles J."/>
            <person name="Baker S.G."/>
            <person name="Basham D."/>
            <person name="Bowman S."/>
            <person name="Brooks K."/>
            <person name="Brown D."/>
            <person name="Brown S."/>
            <person name="Chillingworth T."/>
            <person name="Churcher C.M."/>
            <person name="Collins M."/>
            <person name="Connor R."/>
            <person name="Cronin A."/>
            <person name="Davis P."/>
            <person name="Feltwell T."/>
            <person name="Fraser A."/>
            <person name="Gentles S."/>
            <person name="Goble A."/>
            <person name="Hamlin N."/>
            <person name="Harris D.E."/>
            <person name="Hidalgo J."/>
            <person name="Hodgson G."/>
            <person name="Holroyd S."/>
            <person name="Hornsby T."/>
            <person name="Howarth S."/>
            <person name="Huckle E.J."/>
            <person name="Hunt S."/>
            <person name="Jagels K."/>
            <person name="James K.D."/>
            <person name="Jones L."/>
            <person name="Jones M."/>
            <person name="Leather S."/>
            <person name="McDonald S."/>
            <person name="McLean J."/>
            <person name="Mooney P."/>
            <person name="Moule S."/>
            <person name="Mungall K.L."/>
            <person name="Murphy L.D."/>
            <person name="Niblett D."/>
            <person name="Odell C."/>
            <person name="Oliver K."/>
            <person name="O'Neil S."/>
            <person name="Pearson D."/>
            <person name="Quail M.A."/>
            <person name="Rabbinowitsch E."/>
            <person name="Rutherford K.M."/>
            <person name="Rutter S."/>
            <person name="Saunders D."/>
            <person name="Seeger K."/>
            <person name="Sharp S."/>
            <person name="Skelton J."/>
            <person name="Simmonds M.N."/>
            <person name="Squares R."/>
            <person name="Squares S."/>
            <person name="Stevens K."/>
            <person name="Taylor K."/>
            <person name="Taylor R.G."/>
            <person name="Tivey A."/>
            <person name="Walsh S.V."/>
            <person name="Warren T."/>
            <person name="Whitehead S."/>
            <person name="Woodward J.R."/>
            <person name="Volckaert G."/>
            <person name="Aert R."/>
            <person name="Robben J."/>
            <person name="Grymonprez B."/>
            <person name="Weltjens I."/>
            <person name="Vanstreels E."/>
            <person name="Rieger M."/>
            <person name="Schaefer M."/>
            <person name="Mueller-Auer S."/>
            <person name="Gabel C."/>
            <person name="Fuchs M."/>
            <person name="Duesterhoeft A."/>
            <person name="Fritzc C."/>
            <person name="Holzer E."/>
            <person name="Moestl D."/>
            <person name="Hilbert H."/>
            <person name="Borzym K."/>
            <person name="Langer I."/>
            <person name="Beck A."/>
            <person name="Lehrach H."/>
            <person name="Reinhardt R."/>
            <person name="Pohl T.M."/>
            <person name="Eger P."/>
            <person name="Zimmermann W."/>
            <person name="Wedler H."/>
            <person name="Wambutt R."/>
            <person name="Purnelle B."/>
            <person name="Goffeau A."/>
            <person name="Cadieu E."/>
            <person name="Dreano S."/>
            <person name="Gloux S."/>
            <person name="Lelaure V."/>
            <person name="Mottier S."/>
            <person name="Galibert F."/>
            <person name="Aves S.J."/>
            <person name="Xiang Z."/>
            <person name="Hunt C."/>
            <person name="Moore K."/>
            <person name="Hurst S.M."/>
            <person name="Lucas M."/>
            <person name="Rochet M."/>
            <person name="Gaillardin C."/>
            <person name="Tallada V.A."/>
            <person name="Garzon A."/>
            <person name="Thode G."/>
            <person name="Daga R.R."/>
            <person name="Cruzado L."/>
            <person name="Jimenez J."/>
            <person name="Sanchez M."/>
            <person name="del Rey F."/>
            <person name="Benito J."/>
            <person name="Dominguez A."/>
            <person name="Revuelta J.L."/>
            <person name="Moreno S."/>
            <person name="Armstrong J."/>
            <person name="Forsburg S.L."/>
            <person name="Cerutti L."/>
            <person name="Lowe T."/>
            <person name="McCombie W.R."/>
            <person name="Paulsen I."/>
            <person name="Potashkin J."/>
            <person name="Shpakovski G.V."/>
            <person name="Ussery D."/>
            <person name="Barrell B.G."/>
            <person name="Nurse P."/>
        </authorList>
    </citation>
    <scope>NUCLEOTIDE SEQUENCE [LARGE SCALE GENOMIC DNA]</scope>
    <source>
        <strain>972 / ATCC 24843</strain>
    </source>
</reference>
<reference key="2">
    <citation type="journal article" date="1999" name="Plant Cell">
        <title>Phytochelatin synthase genes from Arabidopsis and the yeast Schizosaccharomyces pombe.</title>
        <authorList>
            <person name="Ha S.-B."/>
            <person name="Smith A.P."/>
            <person name="Howden R."/>
            <person name="Dietrich W.M."/>
            <person name="Bugg S."/>
            <person name="O'Connell M.J."/>
            <person name="Goldsbrough P.B."/>
            <person name="Cobbett C.S."/>
        </authorList>
    </citation>
    <scope>FUNCTION</scope>
    <scope>INDUCTION</scope>
</reference>
<reference key="3">
    <citation type="journal article" date="1999" name="EMBO J.">
        <title>Tolerance to toxic metals by a gene family of phytochelatin synthases from plants and yeast.</title>
        <authorList>
            <person name="Clemens S."/>
            <person name="Kim E.J."/>
            <person name="Neumann D."/>
            <person name="Schroeder J.I."/>
        </authorList>
    </citation>
    <scope>FUNCTION</scope>
</reference>
<feature type="chain" id="PRO_0000116449" description="Glutathione gamma-glutamylcysteinyltransferase">
    <location>
        <begin position="1"/>
        <end position="414"/>
    </location>
</feature>
<feature type="domain" description="Peptidase C83" evidence="1">
    <location>
        <begin position="37"/>
        <end position="256"/>
    </location>
</feature>
<name>PCS_SCHPO</name>
<proteinExistence type="evidence at transcript level"/>
<protein>
    <recommendedName>
        <fullName>Glutathione gamma-glutamylcysteinyltransferase</fullName>
        <ecNumber>2.3.2.15</ecNumber>
    </recommendedName>
    <alternativeName>
        <fullName>Phytochelatin synthase</fullName>
    </alternativeName>
</protein>
<organism>
    <name type="scientific">Schizosaccharomyces pombe (strain 972 / ATCC 24843)</name>
    <name type="common">Fission yeast</name>
    <dbReference type="NCBI Taxonomy" id="284812"/>
    <lineage>
        <taxon>Eukaryota</taxon>
        <taxon>Fungi</taxon>
        <taxon>Dikarya</taxon>
        <taxon>Ascomycota</taxon>
        <taxon>Taphrinomycotina</taxon>
        <taxon>Schizosaccharomycetes</taxon>
        <taxon>Schizosaccharomycetales</taxon>
        <taxon>Schizosaccharomycetaceae</taxon>
        <taxon>Schizosaccharomyces</taxon>
    </lineage>
</organism>
<dbReference type="EC" id="2.3.2.15"/>
<dbReference type="EMBL" id="CU329670">
    <property type="protein sequence ID" value="CAA92263.1"/>
    <property type="molecule type" value="Genomic_DNA"/>
</dbReference>
<dbReference type="PIR" id="T38742">
    <property type="entry name" value="T38742"/>
</dbReference>
<dbReference type="SMR" id="Q10075"/>
<dbReference type="BioGRID" id="279789">
    <property type="interactions" value="8"/>
</dbReference>
<dbReference type="FunCoup" id="Q10075">
    <property type="interactions" value="2"/>
</dbReference>
<dbReference type="STRING" id="284812.Q10075"/>
<dbReference type="iPTMnet" id="Q10075"/>
<dbReference type="PaxDb" id="4896-SPAC3H1.10.1"/>
<dbReference type="EnsemblFungi" id="SPAC3H1.10.1">
    <property type="protein sequence ID" value="SPAC3H1.10.1:pep"/>
    <property type="gene ID" value="SPAC3H1.10"/>
</dbReference>
<dbReference type="KEGG" id="spo:2543367"/>
<dbReference type="PomBase" id="SPAC3H1.10"/>
<dbReference type="VEuPathDB" id="FungiDB:SPAC3H1.10"/>
<dbReference type="eggNOG" id="KOG0632">
    <property type="taxonomic scope" value="Eukaryota"/>
</dbReference>
<dbReference type="HOGENOM" id="CLU_046059_1_0_1"/>
<dbReference type="InParanoid" id="Q10075"/>
<dbReference type="OMA" id="LCMILNS"/>
<dbReference type="PhylomeDB" id="Q10075"/>
<dbReference type="PRO" id="PR:Q10075"/>
<dbReference type="Proteomes" id="UP000002485">
    <property type="component" value="Chromosome I"/>
</dbReference>
<dbReference type="GO" id="GO:0005737">
    <property type="term" value="C:cytoplasm"/>
    <property type="evidence" value="ECO:0007005"/>
    <property type="project" value="PomBase"/>
</dbReference>
<dbReference type="GO" id="GO:0005829">
    <property type="term" value="C:cytosol"/>
    <property type="evidence" value="ECO:0007005"/>
    <property type="project" value="PomBase"/>
</dbReference>
<dbReference type="GO" id="GO:0005634">
    <property type="term" value="C:nucleus"/>
    <property type="evidence" value="ECO:0007005"/>
    <property type="project" value="PomBase"/>
</dbReference>
<dbReference type="GO" id="GO:0046870">
    <property type="term" value="F:cadmium ion binding"/>
    <property type="evidence" value="ECO:0000314"/>
    <property type="project" value="PomBase"/>
</dbReference>
<dbReference type="GO" id="GO:0016756">
    <property type="term" value="F:glutathione gamma-glutamylcysteinyltransferase activity"/>
    <property type="evidence" value="ECO:0000314"/>
    <property type="project" value="PomBase"/>
</dbReference>
<dbReference type="GO" id="GO:0098849">
    <property type="term" value="P:cellular detoxification of cadmium ion"/>
    <property type="evidence" value="ECO:0000315"/>
    <property type="project" value="PomBase"/>
</dbReference>
<dbReference type="GO" id="GO:0071276">
    <property type="term" value="P:cellular response to cadmium ion"/>
    <property type="evidence" value="ECO:0000315"/>
    <property type="project" value="PomBase"/>
</dbReference>
<dbReference type="GO" id="GO:0010273">
    <property type="term" value="P:detoxification of copper ion"/>
    <property type="evidence" value="ECO:0000315"/>
    <property type="project" value="PomBase"/>
</dbReference>
<dbReference type="GO" id="GO:0046938">
    <property type="term" value="P:phytochelatin biosynthetic process"/>
    <property type="evidence" value="ECO:0000314"/>
    <property type="project" value="PomBase"/>
</dbReference>
<dbReference type="FunFam" id="3.90.70.30:FF:000001">
    <property type="entry name" value="Glutathione gamma-glutamylcysteinyltransferase 1"/>
    <property type="match status" value="1"/>
</dbReference>
<dbReference type="Gene3D" id="3.90.70.30">
    <property type="entry name" value="Phytochelatin synthase, N-terminal domain"/>
    <property type="match status" value="1"/>
</dbReference>
<dbReference type="InterPro" id="IPR038765">
    <property type="entry name" value="Papain-like_cys_pep_sf"/>
</dbReference>
<dbReference type="InterPro" id="IPR040409">
    <property type="entry name" value="PCS-like"/>
</dbReference>
<dbReference type="InterPro" id="IPR007719">
    <property type="entry name" value="PCS_N"/>
</dbReference>
<dbReference type="InterPro" id="IPR038156">
    <property type="entry name" value="PCS_N_sf"/>
</dbReference>
<dbReference type="PANTHER" id="PTHR33447">
    <property type="entry name" value="GLUTATHIONE GAMMA-GLUTAMYLCYSTEINYLTRANSFERASE"/>
    <property type="match status" value="1"/>
</dbReference>
<dbReference type="PANTHER" id="PTHR33447:SF2">
    <property type="entry name" value="GLUTATHIONE GAMMA-GLUTAMYLCYSTEINYLTRANSFERASE"/>
    <property type="match status" value="1"/>
</dbReference>
<dbReference type="Pfam" id="PF05023">
    <property type="entry name" value="Phytochelatin"/>
    <property type="match status" value="1"/>
</dbReference>
<dbReference type="SUPFAM" id="SSF54001">
    <property type="entry name" value="Cysteine proteinases"/>
    <property type="match status" value="1"/>
</dbReference>
<dbReference type="PROSITE" id="PS51443">
    <property type="entry name" value="PCS"/>
    <property type="match status" value="1"/>
</dbReference>
<keyword id="KW-0104">Cadmium</keyword>
<keyword id="KW-0186">Copper</keyword>
<keyword id="KW-0479">Metal-binding</keyword>
<keyword id="KW-1185">Reference proteome</keyword>
<keyword id="KW-0808">Transferase</keyword>
<keyword id="KW-0862">Zinc</keyword>
<sequence>MNIVKRAVPELLRGMTNATPNIGLIKNKVVSFEAVGQLKKSFYKRQLPKQCLAFDSSLGKDVFLRALQEGRMENYFSLAQQMVTQNEPAFCGLGTLCMILNSLKVDPGRLWKGSWRWYDQYMLDCCRSLSDIEKDGVTLEEFSCLANCNGLRTITKCVKDVSFDEFRKDVISCSTIENKIMAISFCRKVLGQTGDGHFSPVGGFSESDNKILILDVARFKYPCYWVDLKLMYESMFPIDKASGQPRGYVLLEPMHIPLGVLTVGLNKYSWRNVSKHILQQAATVKNADNLAEILLSINQSSIPLIQERSNSSKSGDFEHFKECIRSTKTYHLFLKHTNTNVEYITMAFWAIFSLPMIQKALPKGVLEEIQSLLKEVEISEINTQLTALKKQLDSLTHCCKTDTGCCSSSCCKNT</sequence>
<gene>
    <name type="ORF">SPAC3H1.10</name>
</gene>
<evidence type="ECO:0000255" key="1">
    <source>
        <dbReference type="PROSITE-ProRule" id="PRU00773"/>
    </source>
</evidence>
<evidence type="ECO:0000269" key="2">
    <source>
    </source>
</evidence>
<evidence type="ECO:0000269" key="3">
    <source>
    </source>
</evidence>